<comment type="function">
    <text evidence="1">The RuvA-RuvB-RuvC complex processes Holliday junction (HJ) DNA during genetic recombination and DNA repair, while the RuvA-RuvB complex plays an important role in the rescue of blocked DNA replication forks via replication fork reversal (RFR). RuvA specifically binds to HJ cruciform DNA, conferring on it an open structure. The RuvB hexamer acts as an ATP-dependent pump, pulling dsDNA into and through the RuvAB complex. RuvB forms 2 homohexamers on either side of HJ DNA bound by 1 or 2 RuvA tetramers; 4 subunits per hexamer contact DNA at a time. Coordinated motions by a converter formed by DNA-disengaged RuvB subunits stimulates ATP hydrolysis and nucleotide exchange. Immobilization of the converter enables RuvB to convert the ATP-contained energy into a lever motion, pulling 2 nucleotides of DNA out of the RuvA tetramer per ATP hydrolyzed, thus driving DNA branch migration. The RuvB motors rotate together with the DNA substrate, which together with the progressing nucleotide cycle form the mechanistic basis for DNA recombination by continuous HJ branch migration. Branch migration allows RuvC to scan DNA until it finds its consensus sequence, where it cleaves and resolves cruciform DNA.</text>
</comment>
<comment type="catalytic activity">
    <reaction evidence="1">
        <text>ATP + H2O = ADP + phosphate + H(+)</text>
        <dbReference type="Rhea" id="RHEA:13065"/>
        <dbReference type="ChEBI" id="CHEBI:15377"/>
        <dbReference type="ChEBI" id="CHEBI:15378"/>
        <dbReference type="ChEBI" id="CHEBI:30616"/>
        <dbReference type="ChEBI" id="CHEBI:43474"/>
        <dbReference type="ChEBI" id="CHEBI:456216"/>
    </reaction>
</comment>
<comment type="subunit">
    <text evidence="1">Homohexamer. Forms an RuvA(8)-RuvB(12)-Holliday junction (HJ) complex. HJ DNA is sandwiched between 2 RuvA tetramers; dsDNA enters through RuvA and exits via RuvB. An RuvB hexamer assembles on each DNA strand where it exits the tetramer. Each RuvB hexamer is contacted by two RuvA subunits (via domain III) on 2 adjacent RuvB subunits; this complex drives branch migration. In the full resolvosome a probable DNA-RuvA(4)-RuvB(12)-RuvC(2) complex forms which resolves the HJ.</text>
</comment>
<comment type="subcellular location">
    <subcellularLocation>
        <location evidence="1">Cytoplasm</location>
    </subcellularLocation>
</comment>
<comment type="domain">
    <text evidence="1">Has 3 domains, the large (RuvB-L) and small ATPase (RuvB-S) domains and the C-terminal head (RuvB-H) domain. The head domain binds DNA, while the ATPase domains jointly bind ATP, ADP or are empty depending on the state of the subunit in the translocation cycle. During a single DNA translocation step the structure of each domain remains the same, but their relative positions change.</text>
</comment>
<comment type="similarity">
    <text evidence="1">Belongs to the RuvB family.</text>
</comment>
<proteinExistence type="inferred from homology"/>
<organism>
    <name type="scientific">Helicobacter pylori (strain J99 / ATCC 700824)</name>
    <name type="common">Campylobacter pylori J99</name>
    <dbReference type="NCBI Taxonomy" id="85963"/>
    <lineage>
        <taxon>Bacteria</taxon>
        <taxon>Pseudomonadati</taxon>
        <taxon>Campylobacterota</taxon>
        <taxon>Epsilonproteobacteria</taxon>
        <taxon>Campylobacterales</taxon>
        <taxon>Helicobacteraceae</taxon>
        <taxon>Helicobacter</taxon>
    </lineage>
</organism>
<keyword id="KW-0067">ATP-binding</keyword>
<keyword id="KW-0963">Cytoplasm</keyword>
<keyword id="KW-0227">DNA damage</keyword>
<keyword id="KW-0233">DNA recombination</keyword>
<keyword id="KW-0234">DNA repair</keyword>
<keyword id="KW-0238">DNA-binding</keyword>
<keyword id="KW-0378">Hydrolase</keyword>
<keyword id="KW-0547">Nucleotide-binding</keyword>
<evidence type="ECO:0000255" key="1">
    <source>
        <dbReference type="HAMAP-Rule" id="MF_00016"/>
    </source>
</evidence>
<reference key="1">
    <citation type="journal article" date="1999" name="Nature">
        <title>Genomic sequence comparison of two unrelated isolates of the human gastric pathogen Helicobacter pylori.</title>
        <authorList>
            <person name="Alm R.A."/>
            <person name="Ling L.-S.L."/>
            <person name="Moir D.T."/>
            <person name="King B.L."/>
            <person name="Brown E.D."/>
            <person name="Doig P.C."/>
            <person name="Smith D.R."/>
            <person name="Noonan B."/>
            <person name="Guild B.C."/>
            <person name="deJonge B.L."/>
            <person name="Carmel G."/>
            <person name="Tummino P.J."/>
            <person name="Caruso A."/>
            <person name="Uria-Nickelsen M."/>
            <person name="Mills D.M."/>
            <person name="Ives C."/>
            <person name="Gibson R."/>
            <person name="Merberg D."/>
            <person name="Mills S.D."/>
            <person name="Jiang Q."/>
            <person name="Taylor D.E."/>
            <person name="Vovis G.F."/>
            <person name="Trust T.J."/>
        </authorList>
    </citation>
    <scope>NUCLEOTIDE SEQUENCE [LARGE SCALE GENOMIC DNA]</scope>
    <source>
        <strain>J99 / ATCC 700824</strain>
    </source>
</reference>
<accession>Q9ZM57</accession>
<gene>
    <name evidence="1" type="primary">ruvB</name>
    <name type="ordered locus">jhp_0366</name>
</gene>
<sequence>MKERIVNLETLDFETSQEVSLRPNLWEDFIGQEKIKSNLQISICAAKKRQESLDHMLFFGPPGLGKTSISHIIAKEMETNIKITAAPMIEKSGDLAAILTNLQAKDILFIDEIHRLSPAIEEVLYPAMEDFRLDIIIGSGPAAQTIKIDLPPFTLIGATTRAGMLSNPLRDRFGMSFRMQFYSPSELSLIIKKAAAKLNQDIKEESADEIAKRSRGTPRIALRLLKRVRDFALVKNSSLMDLSITLHALNELGVNELGFDEADLAYLSLLANAQGRPVGLNTIAASMREDEGTIEDVIEPFLLANGYLERTAKGRIATPKTHALLKIPTLNPQTLF</sequence>
<protein>
    <recommendedName>
        <fullName evidence="1">Holliday junction branch migration complex subunit RuvB</fullName>
        <ecNumber evidence="1">3.6.4.-</ecNumber>
    </recommendedName>
</protein>
<dbReference type="EC" id="3.6.4.-" evidence="1"/>
<dbReference type="EMBL" id="AE001439">
    <property type="protein sequence ID" value="AAD05938.1"/>
    <property type="molecule type" value="Genomic_DNA"/>
</dbReference>
<dbReference type="PIR" id="F71942">
    <property type="entry name" value="F71942"/>
</dbReference>
<dbReference type="RefSeq" id="WP_000664501.1">
    <property type="nucleotide sequence ID" value="NC_000921.1"/>
</dbReference>
<dbReference type="SMR" id="Q9ZM57"/>
<dbReference type="KEGG" id="hpj:jhp_0366"/>
<dbReference type="PATRIC" id="fig|85963.30.peg.645"/>
<dbReference type="eggNOG" id="COG2255">
    <property type="taxonomic scope" value="Bacteria"/>
</dbReference>
<dbReference type="Proteomes" id="UP000000804">
    <property type="component" value="Chromosome"/>
</dbReference>
<dbReference type="GO" id="GO:0005737">
    <property type="term" value="C:cytoplasm"/>
    <property type="evidence" value="ECO:0007669"/>
    <property type="project" value="UniProtKB-SubCell"/>
</dbReference>
<dbReference type="GO" id="GO:0048476">
    <property type="term" value="C:Holliday junction resolvase complex"/>
    <property type="evidence" value="ECO:0007669"/>
    <property type="project" value="UniProtKB-UniRule"/>
</dbReference>
<dbReference type="GO" id="GO:0005524">
    <property type="term" value="F:ATP binding"/>
    <property type="evidence" value="ECO:0007669"/>
    <property type="project" value="UniProtKB-UniRule"/>
</dbReference>
<dbReference type="GO" id="GO:0016887">
    <property type="term" value="F:ATP hydrolysis activity"/>
    <property type="evidence" value="ECO:0007669"/>
    <property type="project" value="InterPro"/>
</dbReference>
<dbReference type="GO" id="GO:0000400">
    <property type="term" value="F:four-way junction DNA binding"/>
    <property type="evidence" value="ECO:0007669"/>
    <property type="project" value="UniProtKB-UniRule"/>
</dbReference>
<dbReference type="GO" id="GO:0009378">
    <property type="term" value="F:four-way junction helicase activity"/>
    <property type="evidence" value="ECO:0007669"/>
    <property type="project" value="InterPro"/>
</dbReference>
<dbReference type="GO" id="GO:0006310">
    <property type="term" value="P:DNA recombination"/>
    <property type="evidence" value="ECO:0007669"/>
    <property type="project" value="UniProtKB-UniRule"/>
</dbReference>
<dbReference type="GO" id="GO:0006281">
    <property type="term" value="P:DNA repair"/>
    <property type="evidence" value="ECO:0007669"/>
    <property type="project" value="UniProtKB-UniRule"/>
</dbReference>
<dbReference type="CDD" id="cd00009">
    <property type="entry name" value="AAA"/>
    <property type="match status" value="1"/>
</dbReference>
<dbReference type="Gene3D" id="1.10.8.60">
    <property type="match status" value="1"/>
</dbReference>
<dbReference type="Gene3D" id="3.40.50.300">
    <property type="entry name" value="P-loop containing nucleotide triphosphate hydrolases"/>
    <property type="match status" value="1"/>
</dbReference>
<dbReference type="Gene3D" id="1.10.10.10">
    <property type="entry name" value="Winged helix-like DNA-binding domain superfamily/Winged helix DNA-binding domain"/>
    <property type="match status" value="1"/>
</dbReference>
<dbReference type="HAMAP" id="MF_00016">
    <property type="entry name" value="DNA_HJ_migration_RuvB"/>
    <property type="match status" value="1"/>
</dbReference>
<dbReference type="InterPro" id="IPR003593">
    <property type="entry name" value="AAA+_ATPase"/>
</dbReference>
<dbReference type="InterPro" id="IPR041445">
    <property type="entry name" value="AAA_lid_4"/>
</dbReference>
<dbReference type="InterPro" id="IPR004605">
    <property type="entry name" value="DNA_helicase_Holl-junc_RuvB"/>
</dbReference>
<dbReference type="InterPro" id="IPR027417">
    <property type="entry name" value="P-loop_NTPase"/>
</dbReference>
<dbReference type="InterPro" id="IPR008824">
    <property type="entry name" value="RuvB-like_N"/>
</dbReference>
<dbReference type="InterPro" id="IPR008823">
    <property type="entry name" value="RuvB_C"/>
</dbReference>
<dbReference type="InterPro" id="IPR036388">
    <property type="entry name" value="WH-like_DNA-bd_sf"/>
</dbReference>
<dbReference type="InterPro" id="IPR036390">
    <property type="entry name" value="WH_DNA-bd_sf"/>
</dbReference>
<dbReference type="NCBIfam" id="NF000868">
    <property type="entry name" value="PRK00080.1"/>
    <property type="match status" value="1"/>
</dbReference>
<dbReference type="NCBIfam" id="TIGR00635">
    <property type="entry name" value="ruvB"/>
    <property type="match status" value="1"/>
</dbReference>
<dbReference type="PANTHER" id="PTHR42848">
    <property type="match status" value="1"/>
</dbReference>
<dbReference type="PANTHER" id="PTHR42848:SF1">
    <property type="entry name" value="HOLLIDAY JUNCTION BRANCH MIGRATION COMPLEX SUBUNIT RUVB"/>
    <property type="match status" value="1"/>
</dbReference>
<dbReference type="Pfam" id="PF17864">
    <property type="entry name" value="AAA_lid_4"/>
    <property type="match status" value="1"/>
</dbReference>
<dbReference type="Pfam" id="PF05491">
    <property type="entry name" value="RuvB_C"/>
    <property type="match status" value="1"/>
</dbReference>
<dbReference type="Pfam" id="PF05496">
    <property type="entry name" value="RuvB_N"/>
    <property type="match status" value="1"/>
</dbReference>
<dbReference type="SMART" id="SM00382">
    <property type="entry name" value="AAA"/>
    <property type="match status" value="1"/>
</dbReference>
<dbReference type="SUPFAM" id="SSF52540">
    <property type="entry name" value="P-loop containing nucleoside triphosphate hydrolases"/>
    <property type="match status" value="1"/>
</dbReference>
<dbReference type="SUPFAM" id="SSF46785">
    <property type="entry name" value="Winged helix' DNA-binding domain"/>
    <property type="match status" value="1"/>
</dbReference>
<feature type="chain" id="PRO_0000165541" description="Holliday junction branch migration complex subunit RuvB">
    <location>
        <begin position="1"/>
        <end position="336"/>
    </location>
</feature>
<feature type="region of interest" description="Large ATPase domain (RuvB-L)" evidence="1">
    <location>
        <begin position="1"/>
        <end position="182"/>
    </location>
</feature>
<feature type="region of interest" description="Small ATPAse domain (RuvB-S)" evidence="1">
    <location>
        <begin position="183"/>
        <end position="253"/>
    </location>
</feature>
<feature type="region of interest" description="Head domain (RuvB-H)" evidence="1">
    <location>
        <begin position="256"/>
        <end position="336"/>
    </location>
</feature>
<feature type="binding site" evidence="1">
    <location>
        <position position="21"/>
    </location>
    <ligand>
        <name>ATP</name>
        <dbReference type="ChEBI" id="CHEBI:30616"/>
    </ligand>
</feature>
<feature type="binding site" evidence="1">
    <location>
        <position position="22"/>
    </location>
    <ligand>
        <name>ATP</name>
        <dbReference type="ChEBI" id="CHEBI:30616"/>
    </ligand>
</feature>
<feature type="binding site" evidence="1">
    <location>
        <position position="63"/>
    </location>
    <ligand>
        <name>ATP</name>
        <dbReference type="ChEBI" id="CHEBI:30616"/>
    </ligand>
</feature>
<feature type="binding site" evidence="1">
    <location>
        <position position="66"/>
    </location>
    <ligand>
        <name>ATP</name>
        <dbReference type="ChEBI" id="CHEBI:30616"/>
    </ligand>
</feature>
<feature type="binding site" evidence="1">
    <location>
        <position position="67"/>
    </location>
    <ligand>
        <name>ATP</name>
        <dbReference type="ChEBI" id="CHEBI:30616"/>
    </ligand>
</feature>
<feature type="binding site" evidence="1">
    <location>
        <position position="67"/>
    </location>
    <ligand>
        <name>Mg(2+)</name>
        <dbReference type="ChEBI" id="CHEBI:18420"/>
    </ligand>
</feature>
<feature type="binding site" evidence="1">
    <location>
        <position position="68"/>
    </location>
    <ligand>
        <name>ATP</name>
        <dbReference type="ChEBI" id="CHEBI:30616"/>
    </ligand>
</feature>
<feature type="binding site" evidence="1">
    <location>
        <begin position="129"/>
        <end position="131"/>
    </location>
    <ligand>
        <name>ATP</name>
        <dbReference type="ChEBI" id="CHEBI:30616"/>
    </ligand>
</feature>
<feature type="binding site" evidence="1">
    <location>
        <position position="172"/>
    </location>
    <ligand>
        <name>ATP</name>
        <dbReference type="ChEBI" id="CHEBI:30616"/>
    </ligand>
</feature>
<feature type="binding site" evidence="1">
    <location>
        <position position="182"/>
    </location>
    <ligand>
        <name>ATP</name>
        <dbReference type="ChEBI" id="CHEBI:30616"/>
    </ligand>
</feature>
<feature type="binding site" evidence="1">
    <location>
        <position position="219"/>
    </location>
    <ligand>
        <name>ATP</name>
        <dbReference type="ChEBI" id="CHEBI:30616"/>
    </ligand>
</feature>
<feature type="binding site" evidence="1">
    <location>
        <position position="310"/>
    </location>
    <ligand>
        <name>DNA</name>
        <dbReference type="ChEBI" id="CHEBI:16991"/>
    </ligand>
</feature>
<feature type="binding site" evidence="1">
    <location>
        <position position="315"/>
    </location>
    <ligand>
        <name>DNA</name>
        <dbReference type="ChEBI" id="CHEBI:16991"/>
    </ligand>
</feature>
<name>RUVB_HELPJ</name>